<comment type="function">
    <text evidence="2">Oxysterol-binding protein that mediates feedback control of cholesterol synthesis by controlling both endoplasmic reticulum to Golgi transport of SCAP and degradation of HMGCR. Acts as a negative regulator of cholesterol biosynthesis by mediating the retention of the SCAP-SREBP complex in the endoplasmic reticulum, thereby blocking the processing of sterol regulatory element-binding proteins (SREBPs) SREBF1/SREBP1 and SREBF2/SREBP2. Binds oxysterol, including 25-hydroxycholesterol, regulating interaction with SCAP and retention of the SCAP-SREBP complex in the endoplasmic reticulum. In presence of oxysterol, interacts with SCAP, retaining the SCAP-SREBP complex in the endoplasmic reticulum, thereby preventing SCAP from escorting SREBF1/SREBP1 and SREBF2/SREBP2 to the Golgi. Sterol deprivation or phosphorylation by PCK1 reduce oxysterol-binding, disrupting the interaction between INSIG1 and SCAP, thereby promoting Golgi transport of the SCAP-SREBP complex, followed by processing and nuclear translocation of SREBF1/SREBP1 and SREBF2/SREBP2. Also regulates cholesterol synthesis by regulating degradation of HMGCR: initiates the sterol-mediated ubiquitin-mediated endoplasmic reticulum-associated degradation (ERAD) of HMGCR via recruitment of the reductase to the ubiquitin ligases AMFR/gp78 and/or RNF139. Also regulates degradation of SOAT2/ACAT2 when the lipid levels are low: initiates the ubiquitin-mediated degradation of SOAT2/ACAT2 via recruitment of the ubiquitin ligases AMFR/gp78.</text>
</comment>
<comment type="subunit">
    <text evidence="2 3">Interacts with SCAP; interaction is direct and only takes place in the presence of sterols; it prevents interaction between SCAP and the coat protein complex II (COPII) (By similarity). Associates with the SCAP-SREBP complex (composed of SCAP and SREBF1/SREBP1 or SREBF2/SREBP2); association is mediated via its interaction with SCAP and only takes place in the presence of sterols. Interaction with SCAP is mutually exclusive with PAQR3. Interacts with HMGCR (via its SSD); the interaction, accelerated by sterols, leads to the recruitment of HMGCR to AMFR/gp78 for its ubiquitination by the sterol-mediated ERAD pathway. Interacts with AMFR/gp78 (via its membrane domain); the interaction recruits HMCR at the ER membrane for its ubiquitination and degradation by the sterol-mediated ERAD pathway. Interacts with SOAT2/ACAT2; leading to promote recruitment of AMFR/gp78 and subsequent ubiquitination of SOAT2/ACAT2. Interacts with RNF139. Interacts with RNF145 (By similarity).</text>
</comment>
<comment type="subcellular location">
    <subcellularLocation>
        <location evidence="2">Endoplasmic reticulum membrane</location>
        <topology evidence="2">Multi-pass membrane protein</topology>
    </subcellularLocation>
</comment>
<comment type="tissue specificity">
    <text evidence="6">Highly expressed in liver and kidney.</text>
</comment>
<comment type="induction">
    <text evidence="6">By insulin and hepatectomy.</text>
</comment>
<comment type="domain">
    <text evidence="2">The KxHxx motif mediates association with the coatomer complex.</text>
</comment>
<comment type="domain">
    <text evidence="4">Binds oxysterols in a pocket within their transmembrane domains and interacts with SCAP via transmembrane domains 3 and 4.</text>
</comment>
<comment type="PTM">
    <text evidence="2">Phosphorylation at Ser-189 by PCK1 reduces binding to oxysterol, disrupting the interaction between INSIG1 and SCAP, thereby promoting nuclear translocation of SREBP proteins (SREBF1/SREBP1 or SREBF2/SREBP2) and subsequent transcription of downstream lipogenesis-related genes.</text>
</comment>
<comment type="PTM">
    <text evidence="2">Ubiquitinated by AMFR/gp78 in response to sterol deprivation, leading to its degradation: when the SCAP-SREBP complex becomes dissociated from INSIG1, INSIG1 is then ubiquitinated and degraded in proteasomes. Although ubiquitination is required for rapid INSIG1 degradation, it is not required for release of the SCAP-SREBP complex. Ubiquitinated by RNF139.</text>
</comment>
<comment type="similarity">
    <text evidence="8">Belongs to the INSIG family.</text>
</comment>
<accession>Q08755</accession>
<sequence length="259" mass="28232">MPRLHDHVWSYPSAGAARPYSLPRGMIAAALCPQGPGAPEPEPAPRGQREGTAGFSARPGSWHHDLVQRSLVLFSFGVVLALVLNLLQIQRNVTLFPDEVIATIFSSAWWVPPCCGTAAAVVGLLYPCIDSHLGEPHKFKREWASVMRCIAVFVGINHASAKLDFANNVQLSLTLAALSLGLWWTFDRSRSGLGLGITIAFLATLITQFLVYNGVYQYTSPDFLYIRSWLPCIFFSGGVTVGNIGRQLAMGVPEKPHSD</sequence>
<dbReference type="EMBL" id="L13619">
    <property type="protein sequence ID" value="AAA40938.1"/>
    <property type="molecule type" value="mRNA"/>
</dbReference>
<dbReference type="EMBL" id="BC078827">
    <property type="protein sequence ID" value="AAH78827.1"/>
    <property type="molecule type" value="mRNA"/>
</dbReference>
<dbReference type="PIR" id="A47112">
    <property type="entry name" value="A47112"/>
</dbReference>
<dbReference type="RefSeq" id="NP_071787.1">
    <property type="nucleotide sequence ID" value="NM_022392.2"/>
</dbReference>
<dbReference type="SMR" id="Q08755"/>
<dbReference type="FunCoup" id="Q08755">
    <property type="interactions" value="36"/>
</dbReference>
<dbReference type="STRING" id="10116.ENSRNOP00000009233"/>
<dbReference type="PhosphoSitePlus" id="Q08755"/>
<dbReference type="PaxDb" id="10116-ENSRNOP00000009233"/>
<dbReference type="Ensembl" id="ENSRNOT00000009233.7">
    <property type="protein sequence ID" value="ENSRNOP00000009233.4"/>
    <property type="gene ID" value="ENSRNOG00000006859.7"/>
</dbReference>
<dbReference type="GeneID" id="64194"/>
<dbReference type="KEGG" id="rno:64194"/>
<dbReference type="AGR" id="RGD:708457"/>
<dbReference type="CTD" id="3638"/>
<dbReference type="RGD" id="708457">
    <property type="gene designation" value="Insig1"/>
</dbReference>
<dbReference type="eggNOG" id="KOG4363">
    <property type="taxonomic scope" value="Eukaryota"/>
</dbReference>
<dbReference type="GeneTree" id="ENSGT00580000081600"/>
<dbReference type="HOGENOM" id="CLU_092922_0_0_1"/>
<dbReference type="InParanoid" id="Q08755"/>
<dbReference type="OMA" id="ENHTWSC"/>
<dbReference type="OrthoDB" id="205546at2759"/>
<dbReference type="PhylomeDB" id="Q08755"/>
<dbReference type="TreeFam" id="TF331013"/>
<dbReference type="PRO" id="PR:Q08755"/>
<dbReference type="Proteomes" id="UP000002494">
    <property type="component" value="Chromosome 4"/>
</dbReference>
<dbReference type="Bgee" id="ENSRNOG00000006859">
    <property type="expression patterns" value="Expressed in duodenum and 19 other cell types or tissues"/>
</dbReference>
<dbReference type="GO" id="GO:0005783">
    <property type="term" value="C:endoplasmic reticulum"/>
    <property type="evidence" value="ECO:0000266"/>
    <property type="project" value="RGD"/>
</dbReference>
<dbReference type="GO" id="GO:0005789">
    <property type="term" value="C:endoplasmic reticulum membrane"/>
    <property type="evidence" value="ECO:0000266"/>
    <property type="project" value="RGD"/>
</dbReference>
<dbReference type="GO" id="GO:0032937">
    <property type="term" value="C:SREBP-SCAP-Insig complex"/>
    <property type="evidence" value="ECO:0000266"/>
    <property type="project" value="RGD"/>
</dbReference>
<dbReference type="GO" id="GO:0008142">
    <property type="term" value="F:oxysterol binding"/>
    <property type="evidence" value="ECO:0000250"/>
    <property type="project" value="UniProtKB"/>
</dbReference>
<dbReference type="GO" id="GO:0140311">
    <property type="term" value="F:protein sequestering activity"/>
    <property type="evidence" value="ECO:0000266"/>
    <property type="project" value="RGD"/>
</dbReference>
<dbReference type="GO" id="GO:0032869">
    <property type="term" value="P:cellular response to insulin stimulus"/>
    <property type="evidence" value="ECO:0000270"/>
    <property type="project" value="RGD"/>
</dbReference>
<dbReference type="GO" id="GO:0036315">
    <property type="term" value="P:cellular response to sterol"/>
    <property type="evidence" value="ECO:0000266"/>
    <property type="project" value="RGD"/>
</dbReference>
<dbReference type="GO" id="GO:0006695">
    <property type="term" value="P:cholesterol biosynthetic process"/>
    <property type="evidence" value="ECO:0000266"/>
    <property type="project" value="RGD"/>
</dbReference>
<dbReference type="GO" id="GO:0042632">
    <property type="term" value="P:cholesterol homeostasis"/>
    <property type="evidence" value="ECO:0000266"/>
    <property type="project" value="RGD"/>
</dbReference>
<dbReference type="GO" id="GO:0008203">
    <property type="term" value="P:cholesterol metabolic process"/>
    <property type="evidence" value="ECO:0000266"/>
    <property type="project" value="RGD"/>
</dbReference>
<dbReference type="GO" id="GO:0060363">
    <property type="term" value="P:cranial suture morphogenesis"/>
    <property type="evidence" value="ECO:0000266"/>
    <property type="project" value="RGD"/>
</dbReference>
<dbReference type="GO" id="GO:0042472">
    <property type="term" value="P:inner ear morphogenesis"/>
    <property type="evidence" value="ECO:0000266"/>
    <property type="project" value="RGD"/>
</dbReference>
<dbReference type="GO" id="GO:0042474">
    <property type="term" value="P:middle ear morphogenesis"/>
    <property type="evidence" value="ECO:0000266"/>
    <property type="project" value="RGD"/>
</dbReference>
<dbReference type="GO" id="GO:1901303">
    <property type="term" value="P:negative regulation of cargo loading into COPII-coated vesicle"/>
    <property type="evidence" value="ECO:0000266"/>
    <property type="project" value="RGD"/>
</dbReference>
<dbReference type="GO" id="GO:0045541">
    <property type="term" value="P:negative regulation of cholesterol biosynthetic process"/>
    <property type="evidence" value="ECO:0000266"/>
    <property type="project" value="RGD"/>
</dbReference>
<dbReference type="GO" id="GO:0045599">
    <property type="term" value="P:negative regulation of fat cell differentiation"/>
    <property type="evidence" value="ECO:0000266"/>
    <property type="project" value="RGD"/>
</dbReference>
<dbReference type="GO" id="GO:0045717">
    <property type="term" value="P:negative regulation of fatty acid biosynthetic process"/>
    <property type="evidence" value="ECO:0000266"/>
    <property type="project" value="RGD"/>
</dbReference>
<dbReference type="GO" id="GO:0070862">
    <property type="term" value="P:negative regulation of protein exit from endoplasmic reticulum"/>
    <property type="evidence" value="ECO:0000266"/>
    <property type="project" value="RGD"/>
</dbReference>
<dbReference type="GO" id="GO:0010894">
    <property type="term" value="P:negative regulation of steroid biosynthetic process"/>
    <property type="evidence" value="ECO:0000266"/>
    <property type="project" value="RGD"/>
</dbReference>
<dbReference type="GO" id="GO:0032355">
    <property type="term" value="P:response to estradiol"/>
    <property type="evidence" value="ECO:0000270"/>
    <property type="project" value="RGD"/>
</dbReference>
<dbReference type="GO" id="GO:0070542">
    <property type="term" value="P:response to fatty acid"/>
    <property type="evidence" value="ECO:0000270"/>
    <property type="project" value="RGD"/>
</dbReference>
<dbReference type="GO" id="GO:0033993">
    <property type="term" value="P:response to lipid"/>
    <property type="evidence" value="ECO:0000270"/>
    <property type="project" value="RGD"/>
</dbReference>
<dbReference type="GO" id="GO:0043434">
    <property type="term" value="P:response to peptide hormone"/>
    <property type="evidence" value="ECO:0000270"/>
    <property type="project" value="RGD"/>
</dbReference>
<dbReference type="GO" id="GO:0006991">
    <property type="term" value="P:response to sterol depletion"/>
    <property type="evidence" value="ECO:0000266"/>
    <property type="project" value="RGD"/>
</dbReference>
<dbReference type="GO" id="GO:0060021">
    <property type="term" value="P:roof of mouth development"/>
    <property type="evidence" value="ECO:0000266"/>
    <property type="project" value="RGD"/>
</dbReference>
<dbReference type="GO" id="GO:0032933">
    <property type="term" value="P:SREBP signaling pathway"/>
    <property type="evidence" value="ECO:0000266"/>
    <property type="project" value="RGD"/>
</dbReference>
<dbReference type="GO" id="GO:0036316">
    <property type="term" value="P:SREBP-SCAP complex retention in endoplasmic reticulum"/>
    <property type="evidence" value="ECO:0000266"/>
    <property type="project" value="RGD"/>
</dbReference>
<dbReference type="GO" id="GO:0016126">
    <property type="term" value="P:sterol biosynthetic process"/>
    <property type="evidence" value="ECO:0000266"/>
    <property type="project" value="RGD"/>
</dbReference>
<dbReference type="GO" id="GO:0006641">
    <property type="term" value="P:triglyceride metabolic process"/>
    <property type="evidence" value="ECO:0000266"/>
    <property type="project" value="RGD"/>
</dbReference>
<dbReference type="InterPro" id="IPR025929">
    <property type="entry name" value="INSIG_fam"/>
</dbReference>
<dbReference type="PANTHER" id="PTHR15301">
    <property type="entry name" value="INSULIN-INDUCED GENE 1"/>
    <property type="match status" value="1"/>
</dbReference>
<dbReference type="PANTHER" id="PTHR15301:SF11">
    <property type="entry name" value="INSULIN-INDUCED GENE 1 PROTEIN"/>
    <property type="match status" value="1"/>
</dbReference>
<dbReference type="Pfam" id="PF07281">
    <property type="entry name" value="INSIG"/>
    <property type="match status" value="1"/>
</dbReference>
<keyword id="KW-0153">Cholesterol metabolism</keyword>
<keyword id="KW-0256">Endoplasmic reticulum</keyword>
<keyword id="KW-1017">Isopeptide bond</keyword>
<keyword id="KW-0443">Lipid metabolism</keyword>
<keyword id="KW-0446">Lipid-binding</keyword>
<keyword id="KW-0472">Membrane</keyword>
<keyword id="KW-0597">Phosphoprotein</keyword>
<keyword id="KW-1185">Reference proteome</keyword>
<keyword id="KW-0753">Steroid metabolism</keyword>
<keyword id="KW-1207">Sterol metabolism</keyword>
<keyword id="KW-0812">Transmembrane</keyword>
<keyword id="KW-1133">Transmembrane helix</keyword>
<keyword id="KW-0832">Ubl conjugation</keyword>
<gene>
    <name evidence="9" type="primary">Insig1</name>
    <name evidence="7" type="synonym">Cl-6</name>
</gene>
<name>INSI1_RAT</name>
<protein>
    <recommendedName>
        <fullName evidence="2">Insulin-induced gene 1 protein</fullName>
        <shortName evidence="2">INSIG-1</shortName>
    </recommendedName>
    <alternativeName>
        <fullName evidence="7">Immediate-early protein CL-6</fullName>
    </alternativeName>
    <alternativeName>
        <fullName evidence="7">Insulin-induced growth response protein CL-6</fullName>
    </alternativeName>
</protein>
<proteinExistence type="evidence at transcript level"/>
<organism>
    <name type="scientific">Rattus norvegicus</name>
    <name type="common">Rat</name>
    <dbReference type="NCBI Taxonomy" id="10116"/>
    <lineage>
        <taxon>Eukaryota</taxon>
        <taxon>Metazoa</taxon>
        <taxon>Chordata</taxon>
        <taxon>Craniata</taxon>
        <taxon>Vertebrata</taxon>
        <taxon>Euteleostomi</taxon>
        <taxon>Mammalia</taxon>
        <taxon>Eutheria</taxon>
        <taxon>Euarchontoglires</taxon>
        <taxon>Glires</taxon>
        <taxon>Rodentia</taxon>
        <taxon>Myomorpha</taxon>
        <taxon>Muroidea</taxon>
        <taxon>Muridae</taxon>
        <taxon>Murinae</taxon>
        <taxon>Rattus</taxon>
    </lineage>
</organism>
<reference key="1">
    <citation type="journal article" date="1993" name="J. Biol. Chem.">
        <title>Novel delayed-early and highly insulin-induced growth response genes. Identification of HRS, a potential regulator of alternative pre-mRNA splicing.</title>
        <authorList>
            <person name="Diamond R.H."/>
            <person name="Du K."/>
            <person name="Lee V.M."/>
            <person name="Mohn K.L."/>
            <person name="Haber B.A."/>
            <person name="Tewari D.S."/>
            <person name="Taub R."/>
        </authorList>
    </citation>
    <scope>NUCLEOTIDE SEQUENCE [MRNA]</scope>
    <scope>TISSUE SPECIFICITY</scope>
    <scope>INDUCTION</scope>
    <source>
        <tissue>Liver</tissue>
    </source>
</reference>
<reference key="2">
    <citation type="journal article" date="2004" name="Genome Res.">
        <title>The status, quality, and expansion of the NIH full-length cDNA project: the Mammalian Gene Collection (MGC).</title>
        <authorList>
            <consortium name="The MGC Project Team"/>
        </authorList>
    </citation>
    <scope>NUCLEOTIDE SEQUENCE [LARGE SCALE MRNA]</scope>
    <source>
        <tissue>Lung</tissue>
    </source>
</reference>
<feature type="chain" id="PRO_0000191677" description="Insulin-induced gene 1 protein">
    <location>
        <begin position="1"/>
        <end position="259"/>
    </location>
</feature>
<feature type="topological domain" description="Cytoplasmic" evidence="2">
    <location>
        <begin position="1"/>
        <end position="66"/>
    </location>
</feature>
<feature type="transmembrane region" description="Helical; Name=1" evidence="1">
    <location>
        <begin position="67"/>
        <end position="89"/>
    </location>
</feature>
<feature type="topological domain" description="Extracellular" evidence="8">
    <location>
        <begin position="90"/>
        <end position="108"/>
    </location>
</feature>
<feature type="transmembrane region" description="Helical; Name=2" evidence="1">
    <location>
        <begin position="109"/>
        <end position="126"/>
    </location>
</feature>
<feature type="topological domain" description="Cytoplasmic" evidence="8">
    <location>
        <begin position="127"/>
        <end position="141"/>
    </location>
</feature>
<feature type="transmembrane region" description="Helical; Name=3" evidence="1">
    <location>
        <begin position="142"/>
        <end position="164"/>
    </location>
</feature>
<feature type="topological domain" description="Extracellular" evidence="8">
    <location>
        <begin position="165"/>
        <end position="167"/>
    </location>
</feature>
<feature type="transmembrane region" description="Helical; Name=4" evidence="1">
    <location>
        <begin position="168"/>
        <end position="186"/>
    </location>
</feature>
<feature type="topological domain" description="Cytoplasmic" evidence="2">
    <location>
        <begin position="187"/>
        <end position="191"/>
    </location>
</feature>
<feature type="transmembrane region" description="Helical; Name=5" evidence="1">
    <location>
        <begin position="192"/>
        <end position="213"/>
    </location>
</feature>
<feature type="topological domain" description="Extracellular" evidence="8">
    <location>
        <begin position="214"/>
        <end position="227"/>
    </location>
</feature>
<feature type="transmembrane region" description="Helical; Name=6" evidence="1">
    <location>
        <begin position="228"/>
        <end position="245"/>
    </location>
</feature>
<feature type="topological domain" description="Cytoplasmic" evidence="2">
    <location>
        <begin position="246"/>
        <end position="259"/>
    </location>
</feature>
<feature type="region of interest" description="Disordered" evidence="5">
    <location>
        <begin position="33"/>
        <end position="57"/>
    </location>
</feature>
<feature type="short sequence motif" description="KxHxx" evidence="2">
    <location>
        <begin position="253"/>
        <end position="259"/>
    </location>
</feature>
<feature type="site" description="Required for the recognition of 25-hydroxycholesterol" evidence="4">
    <location>
        <position position="153"/>
    </location>
</feature>
<feature type="modified residue" description="Phosphoserine" evidence="2">
    <location>
        <position position="189"/>
    </location>
</feature>
<feature type="cross-link" description="Glycyl lysine isopeptide (Lys-Gly) (interchain with G-Cter in ubiquitin)" evidence="2">
    <location>
        <position position="138"/>
    </location>
</feature>
<feature type="cross-link" description="Glycyl lysine isopeptide (Lys-Gly) (interchain with G-Cter in ubiquitin)" evidence="2">
    <location>
        <position position="140"/>
    </location>
</feature>
<evidence type="ECO:0000250" key="1">
    <source>
        <dbReference type="UniProtKB" id="A1T557"/>
    </source>
</evidence>
<evidence type="ECO:0000250" key="2">
    <source>
        <dbReference type="UniProtKB" id="O15503"/>
    </source>
</evidence>
<evidence type="ECO:0000250" key="3">
    <source>
        <dbReference type="UniProtKB" id="Q8BGI3"/>
    </source>
</evidence>
<evidence type="ECO:0000250" key="4">
    <source>
        <dbReference type="UniProtKB" id="Q9Y5U4"/>
    </source>
</evidence>
<evidence type="ECO:0000256" key="5">
    <source>
        <dbReference type="SAM" id="MobiDB-lite"/>
    </source>
</evidence>
<evidence type="ECO:0000269" key="6">
    <source>
    </source>
</evidence>
<evidence type="ECO:0000303" key="7">
    <source>
    </source>
</evidence>
<evidence type="ECO:0000305" key="8"/>
<evidence type="ECO:0000312" key="9">
    <source>
        <dbReference type="RGD" id="708457"/>
    </source>
</evidence>